<comment type="function">
    <text evidence="1">NDH shuttles electrons from NAD(P)H:plastoquinone, via FMN and iron-sulfur (Fe-S) centers, to quinones in the photosynthetic chain and possibly in a chloroplast respiratory chain. The immediate electron acceptor for the enzyme in this species is believed to be plastoquinone. Couples the redox reaction to proton translocation, and thus conserves the redox energy in a proton gradient.</text>
</comment>
<comment type="catalytic activity">
    <reaction evidence="1">
        <text>a plastoquinone + NADH + (n+1) H(+)(in) = a plastoquinol + NAD(+) + n H(+)(out)</text>
        <dbReference type="Rhea" id="RHEA:42608"/>
        <dbReference type="Rhea" id="RHEA-COMP:9561"/>
        <dbReference type="Rhea" id="RHEA-COMP:9562"/>
        <dbReference type="ChEBI" id="CHEBI:15378"/>
        <dbReference type="ChEBI" id="CHEBI:17757"/>
        <dbReference type="ChEBI" id="CHEBI:57540"/>
        <dbReference type="ChEBI" id="CHEBI:57945"/>
        <dbReference type="ChEBI" id="CHEBI:62192"/>
    </reaction>
</comment>
<comment type="catalytic activity">
    <reaction evidence="1">
        <text>a plastoquinone + NADPH + (n+1) H(+)(in) = a plastoquinol + NADP(+) + n H(+)(out)</text>
        <dbReference type="Rhea" id="RHEA:42612"/>
        <dbReference type="Rhea" id="RHEA-COMP:9561"/>
        <dbReference type="Rhea" id="RHEA-COMP:9562"/>
        <dbReference type="ChEBI" id="CHEBI:15378"/>
        <dbReference type="ChEBI" id="CHEBI:17757"/>
        <dbReference type="ChEBI" id="CHEBI:57783"/>
        <dbReference type="ChEBI" id="CHEBI:58349"/>
        <dbReference type="ChEBI" id="CHEBI:62192"/>
    </reaction>
</comment>
<comment type="subunit">
    <text evidence="1">NDH is composed of at least 16 different subunits, 5 of which are encoded in the nucleus.</text>
</comment>
<comment type="subcellular location">
    <subcellularLocation>
        <location evidence="1">Plastid</location>
        <location evidence="1">Chloroplast thylakoid membrane</location>
        <topology evidence="1">Multi-pass membrane protein</topology>
    </subcellularLocation>
</comment>
<comment type="similarity">
    <text evidence="1">Belongs to the complex I subunit 4L family.</text>
</comment>
<proteinExistence type="inferred from homology"/>
<keyword id="KW-0150">Chloroplast</keyword>
<keyword id="KW-0472">Membrane</keyword>
<keyword id="KW-0520">NAD</keyword>
<keyword id="KW-0521">NADP</keyword>
<keyword id="KW-0934">Plastid</keyword>
<keyword id="KW-0618">Plastoquinone</keyword>
<keyword id="KW-0874">Quinone</keyword>
<keyword id="KW-1185">Reference proteome</keyword>
<keyword id="KW-0793">Thylakoid</keyword>
<keyword id="KW-1278">Translocase</keyword>
<keyword id="KW-0812">Transmembrane</keyword>
<keyword id="KW-1133">Transmembrane helix</keyword>
<keyword id="KW-0813">Transport</keyword>
<protein>
    <recommendedName>
        <fullName evidence="1">NAD(P)H-quinone oxidoreductase subunit 4L, chloroplastic</fullName>
        <ecNumber evidence="1">7.1.1.-</ecNumber>
    </recommendedName>
    <alternativeName>
        <fullName evidence="1">NAD(P)H dehydrogenase subunit 4L</fullName>
    </alternativeName>
    <alternativeName>
        <fullName evidence="1">NADH-plastoquinone oxidoreductase subunit 4L</fullName>
    </alternativeName>
</protein>
<dbReference type="EC" id="7.1.1.-" evidence="1"/>
<dbReference type="EMBL" id="Z00044">
    <property type="protein sequence ID" value="CAA77396.1"/>
    <property type="molecule type" value="Genomic_DNA"/>
</dbReference>
<dbReference type="PIR" id="A00433">
    <property type="entry name" value="DENTNL"/>
</dbReference>
<dbReference type="RefSeq" id="NP_054559.1">
    <property type="nucleotide sequence ID" value="NC_001879.2"/>
</dbReference>
<dbReference type="SMR" id="P06261"/>
<dbReference type="GeneID" id="800415"/>
<dbReference type="KEGG" id="nta:800415"/>
<dbReference type="OMA" id="FDVWLSR"/>
<dbReference type="OrthoDB" id="1925110at2759"/>
<dbReference type="Proteomes" id="UP000084051">
    <property type="component" value="Unplaced"/>
</dbReference>
<dbReference type="GO" id="GO:0009535">
    <property type="term" value="C:chloroplast thylakoid membrane"/>
    <property type="evidence" value="ECO:0007669"/>
    <property type="project" value="UniProtKB-SubCell"/>
</dbReference>
<dbReference type="GO" id="GO:0016655">
    <property type="term" value="F:oxidoreductase activity, acting on NAD(P)H, quinone or similar compound as acceptor"/>
    <property type="evidence" value="ECO:0007669"/>
    <property type="project" value="UniProtKB-UniRule"/>
</dbReference>
<dbReference type="GO" id="GO:0048038">
    <property type="term" value="F:quinone binding"/>
    <property type="evidence" value="ECO:0007669"/>
    <property type="project" value="UniProtKB-KW"/>
</dbReference>
<dbReference type="GO" id="GO:0042773">
    <property type="term" value="P:ATP synthesis coupled electron transport"/>
    <property type="evidence" value="ECO:0007669"/>
    <property type="project" value="InterPro"/>
</dbReference>
<dbReference type="GO" id="GO:0019684">
    <property type="term" value="P:photosynthesis, light reaction"/>
    <property type="evidence" value="ECO:0007669"/>
    <property type="project" value="UniProtKB-UniRule"/>
</dbReference>
<dbReference type="FunFam" id="1.10.287.3510:FF:000001">
    <property type="entry name" value="NADH-quinone oxidoreductase subunit K"/>
    <property type="match status" value="1"/>
</dbReference>
<dbReference type="Gene3D" id="1.10.287.3510">
    <property type="match status" value="1"/>
</dbReference>
<dbReference type="HAMAP" id="MF_01456">
    <property type="entry name" value="NDH1_NuoK"/>
    <property type="match status" value="1"/>
</dbReference>
<dbReference type="InterPro" id="IPR001133">
    <property type="entry name" value="NADH_UbQ_OxRdtase_chain4L/K"/>
</dbReference>
<dbReference type="InterPro" id="IPR039428">
    <property type="entry name" value="NUOK/Mnh_C1-like"/>
</dbReference>
<dbReference type="NCBIfam" id="NF004320">
    <property type="entry name" value="PRK05715.1-2"/>
    <property type="match status" value="1"/>
</dbReference>
<dbReference type="NCBIfam" id="NF004322">
    <property type="entry name" value="PRK05715.1-4"/>
    <property type="match status" value="1"/>
</dbReference>
<dbReference type="NCBIfam" id="NF004323">
    <property type="entry name" value="PRK05715.1-5"/>
    <property type="match status" value="1"/>
</dbReference>
<dbReference type="PANTHER" id="PTHR11434:SF16">
    <property type="entry name" value="NADH-UBIQUINONE OXIDOREDUCTASE CHAIN 4L"/>
    <property type="match status" value="1"/>
</dbReference>
<dbReference type="PANTHER" id="PTHR11434">
    <property type="entry name" value="NADH-UBIQUINONE OXIDOREDUCTASE SUBUNIT ND4L"/>
    <property type="match status" value="1"/>
</dbReference>
<dbReference type="Pfam" id="PF00420">
    <property type="entry name" value="Oxidored_q2"/>
    <property type="match status" value="1"/>
</dbReference>
<reference key="1">
    <citation type="journal article" date="1986" name="EMBO J.">
        <title>The complete nucleotide sequence of the tobacco chloroplast genome: its gene organization and expression.</title>
        <authorList>
            <person name="Shinozaki K."/>
            <person name="Ohme M."/>
            <person name="Tanaka M."/>
            <person name="Wakasugi T."/>
            <person name="Hayashida N."/>
            <person name="Matsubayashi T."/>
            <person name="Zaita N."/>
            <person name="Chunwongse J."/>
            <person name="Obokata J."/>
            <person name="Yamaguchi-Shinozaki K."/>
            <person name="Ohto C."/>
            <person name="Torazawa K."/>
            <person name="Meng B.-Y."/>
            <person name="Sugita M."/>
            <person name="Deno H."/>
            <person name="Kamogashira T."/>
            <person name="Yamada K."/>
            <person name="Kusuda J."/>
            <person name="Takaiwa F."/>
            <person name="Kato A."/>
            <person name="Tohdoh N."/>
            <person name="Shimada H."/>
            <person name="Sugiura M."/>
        </authorList>
    </citation>
    <scope>NUCLEOTIDE SEQUENCE [LARGE SCALE GENOMIC DNA]</scope>
    <source>
        <strain>cv. Bright Yellow 4</strain>
    </source>
</reference>
<organism>
    <name type="scientific">Nicotiana tabacum</name>
    <name type="common">Common tobacco</name>
    <dbReference type="NCBI Taxonomy" id="4097"/>
    <lineage>
        <taxon>Eukaryota</taxon>
        <taxon>Viridiplantae</taxon>
        <taxon>Streptophyta</taxon>
        <taxon>Embryophyta</taxon>
        <taxon>Tracheophyta</taxon>
        <taxon>Spermatophyta</taxon>
        <taxon>Magnoliopsida</taxon>
        <taxon>eudicotyledons</taxon>
        <taxon>Gunneridae</taxon>
        <taxon>Pentapetalae</taxon>
        <taxon>asterids</taxon>
        <taxon>lamiids</taxon>
        <taxon>Solanales</taxon>
        <taxon>Solanaceae</taxon>
        <taxon>Nicotianoideae</taxon>
        <taxon>Nicotianeae</taxon>
        <taxon>Nicotiana</taxon>
    </lineage>
</organism>
<gene>
    <name evidence="1" type="primary">ndhE</name>
    <name type="synonym">ndh4L</name>
</gene>
<feature type="chain" id="PRO_0000118517" description="NAD(P)H-quinone oxidoreductase subunit 4L, chloroplastic">
    <location>
        <begin position="1"/>
        <end position="101"/>
    </location>
</feature>
<feature type="transmembrane region" description="Helical" evidence="1">
    <location>
        <begin position="2"/>
        <end position="22"/>
    </location>
</feature>
<feature type="transmembrane region" description="Helical" evidence="1">
    <location>
        <begin position="32"/>
        <end position="52"/>
    </location>
</feature>
<feature type="transmembrane region" description="Helical" evidence="1">
    <location>
        <begin position="61"/>
        <end position="81"/>
    </location>
</feature>
<geneLocation type="chloroplast"/>
<evidence type="ECO:0000255" key="1">
    <source>
        <dbReference type="HAMAP-Rule" id="MF_01456"/>
    </source>
</evidence>
<sequence>MILEHVLVLSAYLFSIGIYGLITSRNMVRALMCLELILNAVNINFVTFSDFFDNRQLKGDIFSIFVIAIAAAEAAIGLAIVSSIYRNRKSTRINQSNLLNN</sequence>
<accession>P06261</accession>
<name>NU4LC_TOBAC</name>